<name>RL22_BORBU</name>
<accession>P94272</accession>
<accession>O51436</accession>
<keyword id="KW-0002">3D-structure</keyword>
<keyword id="KW-1185">Reference proteome</keyword>
<keyword id="KW-0687">Ribonucleoprotein</keyword>
<keyword id="KW-0689">Ribosomal protein</keyword>
<keyword id="KW-0694">RNA-binding</keyword>
<keyword id="KW-0699">rRNA-binding</keyword>
<feature type="chain" id="PRO_0000125124" description="Large ribosomal subunit protein uL22">
    <location>
        <begin position="1"/>
        <end position="120"/>
    </location>
</feature>
<feature type="region of interest" description="Disordered" evidence="2">
    <location>
        <begin position="1"/>
        <end position="22"/>
    </location>
</feature>
<feature type="sequence conflict" description="In Ref. 1; AAB36827." evidence="3" ref="1">
    <original>VEVDEKKDIKG</original>
    <variation>R</variation>
    <location>
        <begin position="110"/>
        <end position="120"/>
    </location>
</feature>
<feature type="strand" evidence="4">
    <location>
        <begin position="7"/>
        <end position="16"/>
    </location>
</feature>
<feature type="helix" evidence="4">
    <location>
        <begin position="18"/>
        <end position="28"/>
    </location>
</feature>
<feature type="helix" evidence="4">
    <location>
        <begin position="33"/>
        <end position="42"/>
    </location>
</feature>
<feature type="helix" evidence="4">
    <location>
        <begin position="46"/>
        <end position="65"/>
    </location>
</feature>
<feature type="strand" evidence="4">
    <location>
        <begin position="73"/>
        <end position="92"/>
    </location>
</feature>
<feature type="helix" evidence="4">
    <location>
        <begin position="94"/>
        <end position="96"/>
    </location>
</feature>
<feature type="strand" evidence="4">
    <location>
        <begin position="98"/>
        <end position="114"/>
    </location>
</feature>
<evidence type="ECO:0000255" key="1">
    <source>
        <dbReference type="HAMAP-Rule" id="MF_01331"/>
    </source>
</evidence>
<evidence type="ECO:0000256" key="2">
    <source>
        <dbReference type="SAM" id="MobiDB-lite"/>
    </source>
</evidence>
<evidence type="ECO:0000305" key="3"/>
<evidence type="ECO:0007829" key="4">
    <source>
        <dbReference type="PDB" id="8FN2"/>
    </source>
</evidence>
<dbReference type="EMBL" id="U78193">
    <property type="protein sequence ID" value="AAB36827.1"/>
    <property type="molecule type" value="Genomic_DNA"/>
</dbReference>
<dbReference type="EMBL" id="AE000783">
    <property type="protein sequence ID" value="AAC66859.1"/>
    <property type="molecule type" value="Genomic_DNA"/>
</dbReference>
<dbReference type="PIR" id="B70160">
    <property type="entry name" value="B70160"/>
</dbReference>
<dbReference type="RefSeq" id="NP_212617.1">
    <property type="nucleotide sequence ID" value="NC_001318.1"/>
</dbReference>
<dbReference type="RefSeq" id="WP_002656402.1">
    <property type="nucleotide sequence ID" value="NC_001318.1"/>
</dbReference>
<dbReference type="PDB" id="8FMW">
    <property type="method" value="EM"/>
    <property type="resolution" value="2.86 A"/>
    <property type="chains" value="AU=2-116"/>
</dbReference>
<dbReference type="PDB" id="8FN2">
    <property type="method" value="EM"/>
    <property type="resolution" value="3.40 A"/>
    <property type="chains" value="U=2-116"/>
</dbReference>
<dbReference type="PDBsum" id="8FMW"/>
<dbReference type="PDBsum" id="8FN2"/>
<dbReference type="EMDB" id="EMD-29298"/>
<dbReference type="EMDB" id="EMD-29304"/>
<dbReference type="SMR" id="P94272"/>
<dbReference type="STRING" id="224326.BB_0483"/>
<dbReference type="PaxDb" id="224326-BB_0483"/>
<dbReference type="EnsemblBacteria" id="AAC66859">
    <property type="protein sequence ID" value="AAC66859"/>
    <property type="gene ID" value="BB_0483"/>
</dbReference>
<dbReference type="GeneID" id="56567918"/>
<dbReference type="KEGG" id="bbu:BB_0483"/>
<dbReference type="PATRIC" id="fig|224326.49.peg.874"/>
<dbReference type="HOGENOM" id="CLU_083987_3_1_12"/>
<dbReference type="OrthoDB" id="9805969at2"/>
<dbReference type="Proteomes" id="UP000001807">
    <property type="component" value="Chromosome"/>
</dbReference>
<dbReference type="GO" id="GO:0022625">
    <property type="term" value="C:cytosolic large ribosomal subunit"/>
    <property type="evidence" value="ECO:0007669"/>
    <property type="project" value="TreeGrafter"/>
</dbReference>
<dbReference type="GO" id="GO:0019843">
    <property type="term" value="F:rRNA binding"/>
    <property type="evidence" value="ECO:0007669"/>
    <property type="project" value="UniProtKB-UniRule"/>
</dbReference>
<dbReference type="GO" id="GO:0003735">
    <property type="term" value="F:structural constituent of ribosome"/>
    <property type="evidence" value="ECO:0007669"/>
    <property type="project" value="InterPro"/>
</dbReference>
<dbReference type="GO" id="GO:0006412">
    <property type="term" value="P:translation"/>
    <property type="evidence" value="ECO:0007669"/>
    <property type="project" value="UniProtKB-UniRule"/>
</dbReference>
<dbReference type="CDD" id="cd00336">
    <property type="entry name" value="Ribosomal_L22"/>
    <property type="match status" value="1"/>
</dbReference>
<dbReference type="Gene3D" id="3.90.470.10">
    <property type="entry name" value="Ribosomal protein L22/L17"/>
    <property type="match status" value="1"/>
</dbReference>
<dbReference type="HAMAP" id="MF_01331_B">
    <property type="entry name" value="Ribosomal_uL22_B"/>
    <property type="match status" value="1"/>
</dbReference>
<dbReference type="InterPro" id="IPR001063">
    <property type="entry name" value="Ribosomal_uL22"/>
</dbReference>
<dbReference type="InterPro" id="IPR005727">
    <property type="entry name" value="Ribosomal_uL22_bac/chlpt-type"/>
</dbReference>
<dbReference type="InterPro" id="IPR047867">
    <property type="entry name" value="Ribosomal_uL22_bac/org-type"/>
</dbReference>
<dbReference type="InterPro" id="IPR018260">
    <property type="entry name" value="Ribosomal_uL22_CS"/>
</dbReference>
<dbReference type="InterPro" id="IPR036394">
    <property type="entry name" value="Ribosomal_uL22_sf"/>
</dbReference>
<dbReference type="NCBIfam" id="TIGR01044">
    <property type="entry name" value="rplV_bact"/>
    <property type="match status" value="1"/>
</dbReference>
<dbReference type="PANTHER" id="PTHR13501">
    <property type="entry name" value="CHLOROPLAST 50S RIBOSOMAL PROTEIN L22-RELATED"/>
    <property type="match status" value="1"/>
</dbReference>
<dbReference type="PANTHER" id="PTHR13501:SF8">
    <property type="entry name" value="LARGE RIBOSOMAL SUBUNIT PROTEIN UL22M"/>
    <property type="match status" value="1"/>
</dbReference>
<dbReference type="Pfam" id="PF00237">
    <property type="entry name" value="Ribosomal_L22"/>
    <property type="match status" value="1"/>
</dbReference>
<dbReference type="SUPFAM" id="SSF54843">
    <property type="entry name" value="Ribosomal protein L22"/>
    <property type="match status" value="1"/>
</dbReference>
<dbReference type="PROSITE" id="PS00464">
    <property type="entry name" value="RIBOSOMAL_L22"/>
    <property type="match status" value="1"/>
</dbReference>
<gene>
    <name evidence="1" type="primary">rplV</name>
    <name type="ordered locus">BB_0483</name>
</gene>
<reference key="1">
    <citation type="submission" date="1996-12" db="EMBL/GenBank/DDBJ databases">
        <authorList>
            <person name="Perlee L."/>
            <person name="Qi H."/>
            <person name="Schwartz I."/>
        </authorList>
    </citation>
    <scope>NUCLEOTIDE SEQUENCE [GENOMIC DNA]</scope>
    <source>
        <strain>ATCC 35210 / DSM 4680 / CIP 102532 / B31</strain>
    </source>
</reference>
<reference key="2">
    <citation type="journal article" date="1997" name="Nature">
        <title>Genomic sequence of a Lyme disease spirochaete, Borrelia burgdorferi.</title>
        <authorList>
            <person name="Fraser C.M."/>
            <person name="Casjens S."/>
            <person name="Huang W.M."/>
            <person name="Sutton G.G."/>
            <person name="Clayton R.A."/>
            <person name="Lathigra R."/>
            <person name="White O."/>
            <person name="Ketchum K.A."/>
            <person name="Dodson R.J."/>
            <person name="Hickey E.K."/>
            <person name="Gwinn M.L."/>
            <person name="Dougherty B.A."/>
            <person name="Tomb J.-F."/>
            <person name="Fleischmann R.D."/>
            <person name="Richardson D.L."/>
            <person name="Peterson J.D."/>
            <person name="Kerlavage A.R."/>
            <person name="Quackenbush J."/>
            <person name="Salzberg S.L."/>
            <person name="Hanson M."/>
            <person name="van Vugt R."/>
            <person name="Palmer N."/>
            <person name="Adams M.D."/>
            <person name="Gocayne J.D."/>
            <person name="Weidman J.F."/>
            <person name="Utterback T.R."/>
            <person name="Watthey L."/>
            <person name="McDonald L.A."/>
            <person name="Artiach P."/>
            <person name="Bowman C."/>
            <person name="Garland S.A."/>
            <person name="Fujii C."/>
            <person name="Cotton M.D."/>
            <person name="Horst K."/>
            <person name="Roberts K.M."/>
            <person name="Hatch B."/>
            <person name="Smith H.O."/>
            <person name="Venter J.C."/>
        </authorList>
    </citation>
    <scope>NUCLEOTIDE SEQUENCE [LARGE SCALE GENOMIC DNA]</scope>
    <source>
        <strain>ATCC 35210 / DSM 4680 / CIP 102532 / B31</strain>
    </source>
</reference>
<proteinExistence type="evidence at protein level"/>
<sequence length="120" mass="13666">MLVNRRYTAKGKNLPSSPKKVRPIADNIRGESYIKAIAVLCSMPNKGAKLLEKVVKSAASNAMYHNKNLSEDMIFVKTVMVDDGRRRKKIWPRARGRADRLVNRNCHIFVEVDEKKDIKG</sequence>
<protein>
    <recommendedName>
        <fullName evidence="1">Large ribosomal subunit protein uL22</fullName>
    </recommendedName>
    <alternativeName>
        <fullName evidence="3">50S ribosomal protein L22</fullName>
    </alternativeName>
</protein>
<comment type="function">
    <text evidence="1">This protein binds specifically to 23S rRNA; its binding is stimulated by other ribosomal proteins, e.g. L4, L17, and L20. It is important during the early stages of 50S assembly. It makes multiple contacts with different domains of the 23S rRNA in the assembled 50S subunit and ribosome (By similarity).</text>
</comment>
<comment type="function">
    <text evidence="1">The globular domain of the protein is located near the polypeptide exit tunnel on the outside of the subunit, while an extended beta-hairpin is found that lines the wall of the exit tunnel in the center of the 70S ribosome.</text>
</comment>
<comment type="subunit">
    <text evidence="1">Part of the 50S ribosomal subunit.</text>
</comment>
<comment type="similarity">
    <text evidence="1">Belongs to the universal ribosomal protein uL22 family.</text>
</comment>
<organism>
    <name type="scientific">Borreliella burgdorferi (strain ATCC 35210 / DSM 4680 / CIP 102532 / B31)</name>
    <name type="common">Borrelia burgdorferi</name>
    <dbReference type="NCBI Taxonomy" id="224326"/>
    <lineage>
        <taxon>Bacteria</taxon>
        <taxon>Pseudomonadati</taxon>
        <taxon>Spirochaetota</taxon>
        <taxon>Spirochaetia</taxon>
        <taxon>Spirochaetales</taxon>
        <taxon>Borreliaceae</taxon>
        <taxon>Borreliella</taxon>
    </lineage>
</organism>